<protein>
    <recommendedName>
        <fullName evidence="1">Molybdenum cofactor guanylyltransferase</fullName>
        <shortName evidence="1">MoCo guanylyltransferase</shortName>
        <ecNumber evidence="1">2.7.7.77</ecNumber>
    </recommendedName>
    <alternativeName>
        <fullName evidence="1">GTP:molybdopterin guanylyltransferase</fullName>
    </alternativeName>
    <alternativeName>
        <fullName evidence="1">Mo-MPT guanylyltransferase</fullName>
    </alternativeName>
    <alternativeName>
        <fullName evidence="1">Molybdopterin guanylyltransferase</fullName>
    </alternativeName>
    <alternativeName>
        <fullName evidence="1">Molybdopterin-guanine dinucleotide synthase</fullName>
        <shortName evidence="1">MGD synthase</shortName>
    </alternativeName>
</protein>
<keyword id="KW-0963">Cytoplasm</keyword>
<keyword id="KW-0342">GTP-binding</keyword>
<keyword id="KW-0460">Magnesium</keyword>
<keyword id="KW-0479">Metal-binding</keyword>
<keyword id="KW-0501">Molybdenum cofactor biosynthesis</keyword>
<keyword id="KW-0547">Nucleotide-binding</keyword>
<keyword id="KW-1185">Reference proteome</keyword>
<keyword id="KW-0808">Transferase</keyword>
<dbReference type="EC" id="2.7.7.77" evidence="1"/>
<dbReference type="EMBL" id="AL590842">
    <property type="protein sequence ID" value="CAL18703.1"/>
    <property type="status" value="ALT_INIT"/>
    <property type="molecule type" value="Genomic_DNA"/>
</dbReference>
<dbReference type="EMBL" id="AE009952">
    <property type="protein sequence ID" value="AAM87360.1"/>
    <property type="status" value="ALT_INIT"/>
    <property type="molecule type" value="Genomic_DNA"/>
</dbReference>
<dbReference type="EMBL" id="AE017042">
    <property type="protein sequence ID" value="AAS60295.1"/>
    <property type="status" value="ALT_INIT"/>
    <property type="molecule type" value="Genomic_DNA"/>
</dbReference>
<dbReference type="PIR" id="AF0002">
    <property type="entry name" value="AF0002"/>
</dbReference>
<dbReference type="RefSeq" id="WP_002213171.1">
    <property type="nucleotide sequence ID" value="NZ_WUCM01000127.1"/>
</dbReference>
<dbReference type="RefSeq" id="YP_002345109.1">
    <property type="nucleotide sequence ID" value="NC_003143.1"/>
</dbReference>
<dbReference type="SMR" id="Q8ZJS4"/>
<dbReference type="STRING" id="214092.YPO0013"/>
<dbReference type="PaxDb" id="214092-YPO0013"/>
<dbReference type="DNASU" id="1148762"/>
<dbReference type="EnsemblBacteria" id="AAS60295">
    <property type="protein sequence ID" value="AAS60295"/>
    <property type="gene ID" value="YP_0014"/>
</dbReference>
<dbReference type="GeneID" id="57974576"/>
<dbReference type="KEGG" id="ype:YPO0013"/>
<dbReference type="KEGG" id="ypk:y3815"/>
<dbReference type="KEGG" id="ypm:YP_0014"/>
<dbReference type="PATRIC" id="fig|214092.21.peg.233"/>
<dbReference type="eggNOG" id="COG0746">
    <property type="taxonomic scope" value="Bacteria"/>
</dbReference>
<dbReference type="HOGENOM" id="CLU_055597_5_1_6"/>
<dbReference type="OMA" id="IDFWYAK"/>
<dbReference type="Proteomes" id="UP000000815">
    <property type="component" value="Chromosome"/>
</dbReference>
<dbReference type="Proteomes" id="UP000001019">
    <property type="component" value="Chromosome"/>
</dbReference>
<dbReference type="Proteomes" id="UP000002490">
    <property type="component" value="Chromosome"/>
</dbReference>
<dbReference type="GO" id="GO:0005737">
    <property type="term" value="C:cytoplasm"/>
    <property type="evidence" value="ECO:0007669"/>
    <property type="project" value="UniProtKB-SubCell"/>
</dbReference>
<dbReference type="GO" id="GO:0005525">
    <property type="term" value="F:GTP binding"/>
    <property type="evidence" value="ECO:0007669"/>
    <property type="project" value="UniProtKB-UniRule"/>
</dbReference>
<dbReference type="GO" id="GO:0046872">
    <property type="term" value="F:metal ion binding"/>
    <property type="evidence" value="ECO:0007669"/>
    <property type="project" value="UniProtKB-KW"/>
</dbReference>
<dbReference type="GO" id="GO:0061603">
    <property type="term" value="F:molybdenum cofactor guanylyltransferase activity"/>
    <property type="evidence" value="ECO:0007669"/>
    <property type="project" value="UniProtKB-EC"/>
</dbReference>
<dbReference type="GO" id="GO:0016779">
    <property type="term" value="F:nucleotidyltransferase activity"/>
    <property type="evidence" value="ECO:0000318"/>
    <property type="project" value="GO_Central"/>
</dbReference>
<dbReference type="GO" id="GO:1902758">
    <property type="term" value="P:bis(molybdopterin guanine dinucleotide)molybdenum biosynthetic process"/>
    <property type="evidence" value="ECO:0000318"/>
    <property type="project" value="GO_Central"/>
</dbReference>
<dbReference type="CDD" id="cd02503">
    <property type="entry name" value="MobA"/>
    <property type="match status" value="1"/>
</dbReference>
<dbReference type="Gene3D" id="3.90.550.10">
    <property type="entry name" value="Spore Coat Polysaccharide Biosynthesis Protein SpsA, Chain A"/>
    <property type="match status" value="1"/>
</dbReference>
<dbReference type="HAMAP" id="MF_00316">
    <property type="entry name" value="MobA"/>
    <property type="match status" value="1"/>
</dbReference>
<dbReference type="InterPro" id="IPR025877">
    <property type="entry name" value="MobA-like_NTP_Trfase"/>
</dbReference>
<dbReference type="InterPro" id="IPR013482">
    <property type="entry name" value="Molybde_CF_guanTrfase"/>
</dbReference>
<dbReference type="InterPro" id="IPR029044">
    <property type="entry name" value="Nucleotide-diphossugar_trans"/>
</dbReference>
<dbReference type="NCBIfam" id="TIGR02665">
    <property type="entry name" value="molyb_mobA"/>
    <property type="match status" value="1"/>
</dbReference>
<dbReference type="PANTHER" id="PTHR19136">
    <property type="entry name" value="MOLYBDENUM COFACTOR GUANYLYLTRANSFERASE"/>
    <property type="match status" value="1"/>
</dbReference>
<dbReference type="PANTHER" id="PTHR19136:SF81">
    <property type="entry name" value="MOLYBDENUM COFACTOR GUANYLYLTRANSFERASE"/>
    <property type="match status" value="1"/>
</dbReference>
<dbReference type="Pfam" id="PF12804">
    <property type="entry name" value="NTP_transf_3"/>
    <property type="match status" value="1"/>
</dbReference>
<dbReference type="SUPFAM" id="SSF53448">
    <property type="entry name" value="Nucleotide-diphospho-sugar transferases"/>
    <property type="match status" value="1"/>
</dbReference>
<sequence length="195" mass="21445">MQPNITGVILAGGRSSRMGGNDKGLIPLNGKPLFQYVIDRFKPQVSDLVINANRNQGLYKESGIPVIDDIITGFVGPLAGMHAGLSYASTEWVVFAPCDVPALPSDLVSQLWQGKKQALAAYANDDERAHPTFALMHISLKTQLADYLIRGDRKLMLFLDSINAQRVKFSGKADLFSNLNTPADCDLWEQKRRGQ</sequence>
<evidence type="ECO:0000255" key="1">
    <source>
        <dbReference type="HAMAP-Rule" id="MF_00316"/>
    </source>
</evidence>
<evidence type="ECO:0000305" key="2"/>
<proteinExistence type="inferred from homology"/>
<name>MOBA_YERPE</name>
<comment type="function">
    <text evidence="1">Transfers a GMP moiety from GTP to Mo-molybdopterin (Mo-MPT) cofactor (Moco or molybdenum cofactor) to form Mo-molybdopterin guanine dinucleotide (Mo-MGD) cofactor.</text>
</comment>
<comment type="catalytic activity">
    <reaction evidence="1">
        <text>Mo-molybdopterin + GTP + H(+) = Mo-molybdopterin guanine dinucleotide + diphosphate</text>
        <dbReference type="Rhea" id="RHEA:34243"/>
        <dbReference type="ChEBI" id="CHEBI:15378"/>
        <dbReference type="ChEBI" id="CHEBI:33019"/>
        <dbReference type="ChEBI" id="CHEBI:37565"/>
        <dbReference type="ChEBI" id="CHEBI:71302"/>
        <dbReference type="ChEBI" id="CHEBI:71310"/>
        <dbReference type="EC" id="2.7.7.77"/>
    </reaction>
</comment>
<comment type="cofactor">
    <cofactor evidence="1">
        <name>Mg(2+)</name>
        <dbReference type="ChEBI" id="CHEBI:18420"/>
    </cofactor>
</comment>
<comment type="subunit">
    <text evidence="1">Monomer.</text>
</comment>
<comment type="subcellular location">
    <subcellularLocation>
        <location evidence="1">Cytoplasm</location>
    </subcellularLocation>
</comment>
<comment type="domain">
    <text evidence="1">The N-terminal domain determines nucleotide recognition and specific binding, while the C-terminal domain determines the specific binding to the target protein.</text>
</comment>
<comment type="similarity">
    <text evidence="1">Belongs to the MobA family.</text>
</comment>
<comment type="sequence caution" evidence="2">
    <conflict type="erroneous initiation">
        <sequence resource="EMBL-CDS" id="AAM87360"/>
    </conflict>
</comment>
<comment type="sequence caution" evidence="2">
    <conflict type="erroneous initiation">
        <sequence resource="EMBL-CDS" id="AAS60295"/>
    </conflict>
</comment>
<comment type="sequence caution" evidence="2">
    <conflict type="erroneous initiation">
        <sequence resource="EMBL-CDS" id="CAL18703"/>
    </conflict>
</comment>
<organism>
    <name type="scientific">Yersinia pestis</name>
    <dbReference type="NCBI Taxonomy" id="632"/>
    <lineage>
        <taxon>Bacteria</taxon>
        <taxon>Pseudomonadati</taxon>
        <taxon>Pseudomonadota</taxon>
        <taxon>Gammaproteobacteria</taxon>
        <taxon>Enterobacterales</taxon>
        <taxon>Yersiniaceae</taxon>
        <taxon>Yersinia</taxon>
    </lineage>
</organism>
<feature type="chain" id="PRO_0000134925" description="Molybdenum cofactor guanylyltransferase">
    <location>
        <begin position="1"/>
        <end position="195"/>
    </location>
</feature>
<feature type="binding site" evidence="1">
    <location>
        <begin position="10"/>
        <end position="12"/>
    </location>
    <ligand>
        <name>GTP</name>
        <dbReference type="ChEBI" id="CHEBI:37565"/>
    </ligand>
</feature>
<feature type="binding site" evidence="1">
    <location>
        <position position="23"/>
    </location>
    <ligand>
        <name>GTP</name>
        <dbReference type="ChEBI" id="CHEBI:37565"/>
    </ligand>
</feature>
<feature type="binding site" evidence="1">
    <location>
        <position position="51"/>
    </location>
    <ligand>
        <name>GTP</name>
        <dbReference type="ChEBI" id="CHEBI:37565"/>
    </ligand>
</feature>
<feature type="binding site" evidence="1">
    <location>
        <position position="69"/>
    </location>
    <ligand>
        <name>GTP</name>
        <dbReference type="ChEBI" id="CHEBI:37565"/>
    </ligand>
</feature>
<feature type="binding site" evidence="1">
    <location>
        <position position="99"/>
    </location>
    <ligand>
        <name>GTP</name>
        <dbReference type="ChEBI" id="CHEBI:37565"/>
    </ligand>
</feature>
<feature type="binding site" evidence="1">
    <location>
        <position position="99"/>
    </location>
    <ligand>
        <name>Mg(2+)</name>
        <dbReference type="ChEBI" id="CHEBI:18420"/>
    </ligand>
</feature>
<feature type="sequence conflict" description="In Ref. 3; AAS60295." evidence="2" ref="3">
    <original>G</original>
    <variation>D</variation>
    <location>
        <position position="13"/>
    </location>
</feature>
<gene>
    <name evidence="1" type="primary">mobA</name>
    <name type="ordered locus">YPO0013</name>
    <name type="ordered locus">y3815</name>
    <name type="ordered locus">YP_0014</name>
</gene>
<accession>Q8ZJS4</accession>
<accession>Q0WKS9</accession>
<reference key="1">
    <citation type="journal article" date="2001" name="Nature">
        <title>Genome sequence of Yersinia pestis, the causative agent of plague.</title>
        <authorList>
            <person name="Parkhill J."/>
            <person name="Wren B.W."/>
            <person name="Thomson N.R."/>
            <person name="Titball R.W."/>
            <person name="Holden M.T.G."/>
            <person name="Prentice M.B."/>
            <person name="Sebaihia M."/>
            <person name="James K.D."/>
            <person name="Churcher C.M."/>
            <person name="Mungall K.L."/>
            <person name="Baker S."/>
            <person name="Basham D."/>
            <person name="Bentley S.D."/>
            <person name="Brooks K."/>
            <person name="Cerdeno-Tarraga A.-M."/>
            <person name="Chillingworth T."/>
            <person name="Cronin A."/>
            <person name="Davies R.M."/>
            <person name="Davis P."/>
            <person name="Dougan G."/>
            <person name="Feltwell T."/>
            <person name="Hamlin N."/>
            <person name="Holroyd S."/>
            <person name="Jagels K."/>
            <person name="Karlyshev A.V."/>
            <person name="Leather S."/>
            <person name="Moule S."/>
            <person name="Oyston P.C.F."/>
            <person name="Quail M.A."/>
            <person name="Rutherford K.M."/>
            <person name="Simmonds M."/>
            <person name="Skelton J."/>
            <person name="Stevens K."/>
            <person name="Whitehead S."/>
            <person name="Barrell B.G."/>
        </authorList>
    </citation>
    <scope>NUCLEOTIDE SEQUENCE [LARGE SCALE GENOMIC DNA]</scope>
    <source>
        <strain>CO-92 / Biovar Orientalis</strain>
    </source>
</reference>
<reference key="2">
    <citation type="journal article" date="2002" name="J. Bacteriol.">
        <title>Genome sequence of Yersinia pestis KIM.</title>
        <authorList>
            <person name="Deng W."/>
            <person name="Burland V."/>
            <person name="Plunkett G. III"/>
            <person name="Boutin A."/>
            <person name="Mayhew G.F."/>
            <person name="Liss P."/>
            <person name="Perna N.T."/>
            <person name="Rose D.J."/>
            <person name="Mau B."/>
            <person name="Zhou S."/>
            <person name="Schwartz D.C."/>
            <person name="Fetherston J.D."/>
            <person name="Lindler L.E."/>
            <person name="Brubaker R.R."/>
            <person name="Plano G.V."/>
            <person name="Straley S.C."/>
            <person name="McDonough K.A."/>
            <person name="Nilles M.L."/>
            <person name="Matson J.S."/>
            <person name="Blattner F.R."/>
            <person name="Perry R.D."/>
        </authorList>
    </citation>
    <scope>NUCLEOTIDE SEQUENCE [LARGE SCALE GENOMIC DNA]</scope>
    <source>
        <strain>KIM10+ / Biovar Mediaevalis</strain>
    </source>
</reference>
<reference key="3">
    <citation type="journal article" date="2004" name="DNA Res.">
        <title>Complete genome sequence of Yersinia pestis strain 91001, an isolate avirulent to humans.</title>
        <authorList>
            <person name="Song Y."/>
            <person name="Tong Z."/>
            <person name="Wang J."/>
            <person name="Wang L."/>
            <person name="Guo Z."/>
            <person name="Han Y."/>
            <person name="Zhang J."/>
            <person name="Pei D."/>
            <person name="Zhou D."/>
            <person name="Qin H."/>
            <person name="Pang X."/>
            <person name="Han Y."/>
            <person name="Zhai J."/>
            <person name="Li M."/>
            <person name="Cui B."/>
            <person name="Qi Z."/>
            <person name="Jin L."/>
            <person name="Dai R."/>
            <person name="Chen F."/>
            <person name="Li S."/>
            <person name="Ye C."/>
            <person name="Du Z."/>
            <person name="Lin W."/>
            <person name="Wang J."/>
            <person name="Yu J."/>
            <person name="Yang H."/>
            <person name="Wang J."/>
            <person name="Huang P."/>
            <person name="Yang R."/>
        </authorList>
    </citation>
    <scope>NUCLEOTIDE SEQUENCE [LARGE SCALE GENOMIC DNA]</scope>
    <source>
        <strain>91001 / Biovar Mediaevalis</strain>
    </source>
</reference>